<evidence type="ECO:0000250" key="1">
    <source>
        <dbReference type="UniProtKB" id="P38803"/>
    </source>
</evidence>
<evidence type="ECO:0000256" key="2">
    <source>
        <dbReference type="SAM" id="MobiDB-lite"/>
    </source>
</evidence>
<evidence type="ECO:0000305" key="3"/>
<organism>
    <name type="scientific">Scheffersomyces stipitis (strain ATCC 58785 / CBS 6054 / NBRC 10063 / NRRL Y-11545)</name>
    <name type="common">Yeast</name>
    <name type="synonym">Pichia stipitis</name>
    <dbReference type="NCBI Taxonomy" id="322104"/>
    <lineage>
        <taxon>Eukaryota</taxon>
        <taxon>Fungi</taxon>
        <taxon>Dikarya</taxon>
        <taxon>Ascomycota</taxon>
        <taxon>Saccharomycotina</taxon>
        <taxon>Pichiomycetes</taxon>
        <taxon>Debaryomycetaceae</taxon>
        <taxon>Scheffersomyces</taxon>
    </lineage>
</organism>
<accession>A3M0B1</accession>
<reference key="1">
    <citation type="journal article" date="2007" name="Nat. Biotechnol.">
        <title>Genome sequence of the lignocellulose-bioconverting and xylose-fermenting yeast Pichia stipitis.</title>
        <authorList>
            <person name="Jeffries T.W."/>
            <person name="Grigoriev I.V."/>
            <person name="Grimwood J."/>
            <person name="Laplaza J.M."/>
            <person name="Aerts A."/>
            <person name="Salamov A."/>
            <person name="Schmutz J."/>
            <person name="Lindquist E."/>
            <person name="Dehal P."/>
            <person name="Shapiro H."/>
            <person name="Jin Y.-S."/>
            <person name="Passoth V."/>
            <person name="Richardson P.M."/>
        </authorList>
    </citation>
    <scope>NUCLEOTIDE SEQUENCE [LARGE SCALE GENOMIC DNA]</scope>
    <source>
        <strain>ATCC 58785 / CBS 6054 / NBRC 10063 / NRRL Y-11545</strain>
    </source>
</reference>
<name>IPI1_PICST</name>
<proteinExistence type="inferred from homology"/>
<protein>
    <recommendedName>
        <fullName>Pre-rRNA-processing protein IPI1</fullName>
    </recommendedName>
</protein>
<feature type="chain" id="PRO_0000308727" description="Pre-rRNA-processing protein IPI1">
    <location>
        <begin position="1"/>
        <end position="363"/>
    </location>
</feature>
<feature type="region of interest" description="Disordered" evidence="2">
    <location>
        <begin position="1"/>
        <end position="38"/>
    </location>
</feature>
<sequence length="363" mass="40167">MATKRKKAQKAKDFVKPKLKVGKTAAKPDNHTDTSFTAKTISLPNQSIAKKSKSGVSEEQKQEIDLSHHLSLTKHHASATRKEVLIYIDQHLPSNPSLYKQIFTSIIPLILDQSASVRTTLVALFNKCANMQPGILELHIRSIALFIHSAMTHLHPEIRNSSTKFLNVLVEHAPQSLSKSFFVKTMRSYFTLMSWTLTDDKKSVSLAITTSAAIGGSVKKARIGHLAVLKAFLQASLFPQLSDSAESEINPAIVVSVHPQSYKYLIPAATSQAFAPLKLFANELPNNSKDIDDGKFHISDLDTITAEDLDTRRKVFVDVFQKPVVKNLNSLVKEGGEVGREANSCMTIIDNLEQELKKVAEDE</sequence>
<comment type="function">
    <text evidence="1">Component of the RIX1 complex required for processing of ITS2 sequences from 35S pre-rRNA.</text>
</comment>
<comment type="subunit">
    <text evidence="1">Component of the RIX1 complex, composed of IPI1, RIX1/IPI2 and IPI3 in a 1:2:2 stoichiometry. The complex interacts (via RIX1) with MDN1 (via its hexameric AAA ATPase ring) and the pre-60S ribosome particles.</text>
</comment>
<comment type="subcellular location">
    <subcellularLocation>
        <location evidence="1">Nucleus</location>
    </subcellularLocation>
</comment>
<comment type="similarity">
    <text evidence="3">Belongs to the IPI1/TEX10 family.</text>
</comment>
<keyword id="KW-0539">Nucleus</keyword>
<keyword id="KW-1185">Reference proteome</keyword>
<keyword id="KW-0690">Ribosome biogenesis</keyword>
<keyword id="KW-0698">rRNA processing</keyword>
<dbReference type="EMBL" id="CP000502">
    <property type="protein sequence ID" value="ABN68682.2"/>
    <property type="molecule type" value="Genomic_DNA"/>
</dbReference>
<dbReference type="RefSeq" id="XP_001386711.2">
    <property type="nucleotide sequence ID" value="XM_001386674.1"/>
</dbReference>
<dbReference type="SMR" id="A3M0B1"/>
<dbReference type="FunCoup" id="A3M0B1">
    <property type="interactions" value="260"/>
</dbReference>
<dbReference type="STRING" id="322104.A3M0B1"/>
<dbReference type="GeneID" id="4841157"/>
<dbReference type="KEGG" id="pic:PICST_91441"/>
<dbReference type="eggNOG" id="KOG2149">
    <property type="taxonomic scope" value="Eukaryota"/>
</dbReference>
<dbReference type="HOGENOM" id="CLU_050252_2_0_1"/>
<dbReference type="InParanoid" id="A3M0B1"/>
<dbReference type="OMA" id="CAGGWVK"/>
<dbReference type="OrthoDB" id="361362at2759"/>
<dbReference type="Proteomes" id="UP000002258">
    <property type="component" value="Chromosome 8"/>
</dbReference>
<dbReference type="GO" id="GO:0005829">
    <property type="term" value="C:cytosol"/>
    <property type="evidence" value="ECO:0007669"/>
    <property type="project" value="EnsemblFungi"/>
</dbReference>
<dbReference type="GO" id="GO:0005654">
    <property type="term" value="C:nucleoplasm"/>
    <property type="evidence" value="ECO:0007669"/>
    <property type="project" value="EnsemblFungi"/>
</dbReference>
<dbReference type="GO" id="GO:0120330">
    <property type="term" value="C:rixosome complex"/>
    <property type="evidence" value="ECO:0007669"/>
    <property type="project" value="EnsemblFungi"/>
</dbReference>
<dbReference type="GO" id="GO:0003682">
    <property type="term" value="F:chromatin binding"/>
    <property type="evidence" value="ECO:0007669"/>
    <property type="project" value="EnsemblFungi"/>
</dbReference>
<dbReference type="GO" id="GO:0000463">
    <property type="term" value="P:maturation of LSU-rRNA from tricistronic rRNA transcript (SSU-rRNA, 5.8S rRNA, LSU-rRNA)"/>
    <property type="evidence" value="ECO:0007669"/>
    <property type="project" value="EnsemblFungi"/>
</dbReference>
<dbReference type="GO" id="GO:0006267">
    <property type="term" value="P:pre-replicative complex assembly involved in nuclear cell cycle DNA replication"/>
    <property type="evidence" value="ECO:0007669"/>
    <property type="project" value="EnsemblFungi"/>
</dbReference>
<dbReference type="GO" id="GO:0030174">
    <property type="term" value="P:regulation of DNA-templated DNA replication initiation"/>
    <property type="evidence" value="ECO:0007669"/>
    <property type="project" value="EnsemblFungi"/>
</dbReference>
<dbReference type="GO" id="GO:0000027">
    <property type="term" value="P:ribosomal large subunit assembly"/>
    <property type="evidence" value="ECO:0007669"/>
    <property type="project" value="EnsemblFungi"/>
</dbReference>
<dbReference type="Gene3D" id="1.25.10.10">
    <property type="entry name" value="Leucine-rich Repeat Variant"/>
    <property type="match status" value="1"/>
</dbReference>
<dbReference type="InterPro" id="IPR011989">
    <property type="entry name" value="ARM-like"/>
</dbReference>
<dbReference type="InterPro" id="IPR016024">
    <property type="entry name" value="ARM-type_fold"/>
</dbReference>
<dbReference type="InterPro" id="IPR024679">
    <property type="entry name" value="Ipi1_N"/>
</dbReference>
<dbReference type="PANTHER" id="PTHR16056">
    <property type="entry name" value="REGULATOR OF MICROTUBULE DYNAMICS PROTEIN"/>
    <property type="match status" value="1"/>
</dbReference>
<dbReference type="PANTHER" id="PTHR16056:SF2">
    <property type="entry name" value="TESTIS-EXPRESSED PROTEIN 10"/>
    <property type="match status" value="1"/>
</dbReference>
<dbReference type="Pfam" id="PF12333">
    <property type="entry name" value="Ipi1_N"/>
    <property type="match status" value="1"/>
</dbReference>
<dbReference type="SUPFAM" id="SSF48371">
    <property type="entry name" value="ARM repeat"/>
    <property type="match status" value="1"/>
</dbReference>
<gene>
    <name type="primary">IPI1</name>
    <name type="ORF">PICST_91441</name>
</gene>